<reference key="1">
    <citation type="submission" date="2007-05" db="EMBL/GenBank/DDBJ databases">
        <title>Complete sequence of Geobacter uraniireducens Rf4.</title>
        <authorList>
            <consortium name="US DOE Joint Genome Institute"/>
            <person name="Copeland A."/>
            <person name="Lucas S."/>
            <person name="Lapidus A."/>
            <person name="Barry K."/>
            <person name="Detter J.C."/>
            <person name="Glavina del Rio T."/>
            <person name="Hammon N."/>
            <person name="Israni S."/>
            <person name="Dalin E."/>
            <person name="Tice H."/>
            <person name="Pitluck S."/>
            <person name="Chertkov O."/>
            <person name="Brettin T."/>
            <person name="Bruce D."/>
            <person name="Han C."/>
            <person name="Schmutz J."/>
            <person name="Larimer F."/>
            <person name="Land M."/>
            <person name="Hauser L."/>
            <person name="Kyrpides N."/>
            <person name="Mikhailova N."/>
            <person name="Shelobolina E."/>
            <person name="Aklujkar M."/>
            <person name="Lovley D."/>
            <person name="Richardson P."/>
        </authorList>
    </citation>
    <scope>NUCLEOTIDE SEQUENCE [LARGE SCALE GENOMIC DNA]</scope>
    <source>
        <strain>ATCC BAA-1134 / JCM 13001 / Rf4</strain>
    </source>
</reference>
<feature type="chain" id="PRO_1000086125" description="Small ribosomal subunit protein uS3">
    <location>
        <begin position="1"/>
        <end position="210"/>
    </location>
</feature>
<feature type="domain" description="KH type-2" evidence="1">
    <location>
        <begin position="38"/>
        <end position="106"/>
    </location>
</feature>
<proteinExistence type="inferred from homology"/>
<gene>
    <name evidence="1" type="primary">rpsC</name>
    <name type="ordered locus">Gura_1073</name>
</gene>
<dbReference type="EMBL" id="CP000698">
    <property type="protein sequence ID" value="ABQ25279.1"/>
    <property type="molecule type" value="Genomic_DNA"/>
</dbReference>
<dbReference type="RefSeq" id="WP_011938002.1">
    <property type="nucleotide sequence ID" value="NC_009483.1"/>
</dbReference>
<dbReference type="SMR" id="A5GAX1"/>
<dbReference type="STRING" id="351605.Gura_1073"/>
<dbReference type="KEGG" id="gur:Gura_1073"/>
<dbReference type="HOGENOM" id="CLU_058591_0_2_7"/>
<dbReference type="OrthoDB" id="9806396at2"/>
<dbReference type="Proteomes" id="UP000006695">
    <property type="component" value="Chromosome"/>
</dbReference>
<dbReference type="GO" id="GO:0022627">
    <property type="term" value="C:cytosolic small ribosomal subunit"/>
    <property type="evidence" value="ECO:0007669"/>
    <property type="project" value="TreeGrafter"/>
</dbReference>
<dbReference type="GO" id="GO:0003729">
    <property type="term" value="F:mRNA binding"/>
    <property type="evidence" value="ECO:0007669"/>
    <property type="project" value="UniProtKB-UniRule"/>
</dbReference>
<dbReference type="GO" id="GO:0019843">
    <property type="term" value="F:rRNA binding"/>
    <property type="evidence" value="ECO:0007669"/>
    <property type="project" value="UniProtKB-UniRule"/>
</dbReference>
<dbReference type="GO" id="GO:0003735">
    <property type="term" value="F:structural constituent of ribosome"/>
    <property type="evidence" value="ECO:0007669"/>
    <property type="project" value="InterPro"/>
</dbReference>
<dbReference type="GO" id="GO:0006412">
    <property type="term" value="P:translation"/>
    <property type="evidence" value="ECO:0007669"/>
    <property type="project" value="UniProtKB-UniRule"/>
</dbReference>
<dbReference type="CDD" id="cd02412">
    <property type="entry name" value="KH-II_30S_S3"/>
    <property type="match status" value="1"/>
</dbReference>
<dbReference type="FunFam" id="3.30.1140.32:FF:000009">
    <property type="entry name" value="30S ribosomal protein S3"/>
    <property type="match status" value="1"/>
</dbReference>
<dbReference type="FunFam" id="3.30.300.20:FF:000001">
    <property type="entry name" value="30S ribosomal protein S3"/>
    <property type="match status" value="1"/>
</dbReference>
<dbReference type="Gene3D" id="3.30.300.20">
    <property type="match status" value="1"/>
</dbReference>
<dbReference type="Gene3D" id="3.30.1140.32">
    <property type="entry name" value="Ribosomal protein S3, C-terminal domain"/>
    <property type="match status" value="1"/>
</dbReference>
<dbReference type="HAMAP" id="MF_01309_B">
    <property type="entry name" value="Ribosomal_uS3_B"/>
    <property type="match status" value="1"/>
</dbReference>
<dbReference type="InterPro" id="IPR004087">
    <property type="entry name" value="KH_dom"/>
</dbReference>
<dbReference type="InterPro" id="IPR015946">
    <property type="entry name" value="KH_dom-like_a/b"/>
</dbReference>
<dbReference type="InterPro" id="IPR004044">
    <property type="entry name" value="KH_dom_type_2"/>
</dbReference>
<dbReference type="InterPro" id="IPR009019">
    <property type="entry name" value="KH_sf_prok-type"/>
</dbReference>
<dbReference type="InterPro" id="IPR036419">
    <property type="entry name" value="Ribosomal_S3_C_sf"/>
</dbReference>
<dbReference type="InterPro" id="IPR005704">
    <property type="entry name" value="Ribosomal_uS3_bac-typ"/>
</dbReference>
<dbReference type="InterPro" id="IPR001351">
    <property type="entry name" value="Ribosomal_uS3_C"/>
</dbReference>
<dbReference type="InterPro" id="IPR018280">
    <property type="entry name" value="Ribosomal_uS3_CS"/>
</dbReference>
<dbReference type="NCBIfam" id="TIGR01009">
    <property type="entry name" value="rpsC_bact"/>
    <property type="match status" value="1"/>
</dbReference>
<dbReference type="PANTHER" id="PTHR11760">
    <property type="entry name" value="30S/40S RIBOSOMAL PROTEIN S3"/>
    <property type="match status" value="1"/>
</dbReference>
<dbReference type="PANTHER" id="PTHR11760:SF19">
    <property type="entry name" value="SMALL RIBOSOMAL SUBUNIT PROTEIN US3C"/>
    <property type="match status" value="1"/>
</dbReference>
<dbReference type="Pfam" id="PF07650">
    <property type="entry name" value="KH_2"/>
    <property type="match status" value="1"/>
</dbReference>
<dbReference type="Pfam" id="PF00189">
    <property type="entry name" value="Ribosomal_S3_C"/>
    <property type="match status" value="1"/>
</dbReference>
<dbReference type="SMART" id="SM00322">
    <property type="entry name" value="KH"/>
    <property type="match status" value="1"/>
</dbReference>
<dbReference type="SUPFAM" id="SSF54814">
    <property type="entry name" value="Prokaryotic type KH domain (KH-domain type II)"/>
    <property type="match status" value="1"/>
</dbReference>
<dbReference type="SUPFAM" id="SSF54821">
    <property type="entry name" value="Ribosomal protein S3 C-terminal domain"/>
    <property type="match status" value="1"/>
</dbReference>
<dbReference type="PROSITE" id="PS50823">
    <property type="entry name" value="KH_TYPE_2"/>
    <property type="match status" value="1"/>
</dbReference>
<dbReference type="PROSITE" id="PS00548">
    <property type="entry name" value="RIBOSOMAL_S3"/>
    <property type="match status" value="1"/>
</dbReference>
<protein>
    <recommendedName>
        <fullName evidence="1">Small ribosomal subunit protein uS3</fullName>
    </recommendedName>
    <alternativeName>
        <fullName evidence="2">30S ribosomal protein S3</fullName>
    </alternativeName>
</protein>
<sequence>MGQKVNPIGFRLGVIKTWDSKWYAEKDYAKLLHEDLKLRSFLKKRLYHSGVSKIEIERAAGKAKINIFTARPGLIIGKKGSEVETLKKELAKLTDKEVYLNIQEVRKPELDAQLVAENIALQLERRVAFRRAMKKSVTSSLKFGAKGIRITCSGRLGGAEMSRTEWYREGRVPLHTLRADIDYGFAEAKTTYGIIGVKVLLFKGEVLSGK</sequence>
<keyword id="KW-1185">Reference proteome</keyword>
<keyword id="KW-0687">Ribonucleoprotein</keyword>
<keyword id="KW-0689">Ribosomal protein</keyword>
<keyword id="KW-0694">RNA-binding</keyword>
<keyword id="KW-0699">rRNA-binding</keyword>
<evidence type="ECO:0000255" key="1">
    <source>
        <dbReference type="HAMAP-Rule" id="MF_01309"/>
    </source>
</evidence>
<evidence type="ECO:0000305" key="2"/>
<organism>
    <name type="scientific">Geotalea uraniireducens (strain Rf4)</name>
    <name type="common">Geobacter uraniireducens</name>
    <dbReference type="NCBI Taxonomy" id="351605"/>
    <lineage>
        <taxon>Bacteria</taxon>
        <taxon>Pseudomonadati</taxon>
        <taxon>Thermodesulfobacteriota</taxon>
        <taxon>Desulfuromonadia</taxon>
        <taxon>Geobacterales</taxon>
        <taxon>Geobacteraceae</taxon>
        <taxon>Geotalea</taxon>
    </lineage>
</organism>
<accession>A5GAX1</accession>
<comment type="function">
    <text evidence="1">Binds the lower part of the 30S subunit head. Binds mRNA in the 70S ribosome, positioning it for translation.</text>
</comment>
<comment type="subunit">
    <text evidence="1">Part of the 30S ribosomal subunit. Forms a tight complex with proteins S10 and S14.</text>
</comment>
<comment type="similarity">
    <text evidence="1">Belongs to the universal ribosomal protein uS3 family.</text>
</comment>
<name>RS3_GEOUR</name>